<sequence>MKVSHHLYDQLSRITSEENVMVDELIRNHTYTKLGGKADVYITPESYSEVQDIIKLANKEDVPFTMLGNGSNLIVKDGGIRGIVMNLQKLASIWREEDKIIAQSGARIIDASRTALAESLAGLEFACGIPGSVGGALYMNAGAYGGEIKDVLESTIVVTKEGDIRTLTAVELDLDYRTSNIPDKGYIVLEATFALKKANSSDIKEVMDDLTYKRESKQPLEYPSCGSVFKRPPGYFAGKLIQDSELQGTQIGGAEVSKKHAGFIVNKNNASATEYINLIRHVQKTVSEKFGVQLEREVRIIGEDPVE</sequence>
<feature type="chain" id="PRO_0000179235" description="UDP-N-acetylenolpyruvoylglucosamine reductase">
    <location>
        <begin position="1"/>
        <end position="307"/>
    </location>
</feature>
<feature type="domain" description="FAD-binding PCMH-type" evidence="1">
    <location>
        <begin position="34"/>
        <end position="198"/>
    </location>
</feature>
<feature type="active site" evidence="1">
    <location>
        <position position="177"/>
    </location>
</feature>
<feature type="active site" description="Proton donor" evidence="1">
    <location>
        <position position="227"/>
    </location>
</feature>
<feature type="active site" evidence="1">
    <location>
        <position position="297"/>
    </location>
</feature>
<organism>
    <name type="scientific">Oceanobacillus iheyensis (strain DSM 14371 / CIP 107618 / JCM 11309 / KCTC 3954 / HTE831)</name>
    <dbReference type="NCBI Taxonomy" id="221109"/>
    <lineage>
        <taxon>Bacteria</taxon>
        <taxon>Bacillati</taxon>
        <taxon>Bacillota</taxon>
        <taxon>Bacilli</taxon>
        <taxon>Bacillales</taxon>
        <taxon>Bacillaceae</taxon>
        <taxon>Oceanobacillus</taxon>
    </lineage>
</organism>
<protein>
    <recommendedName>
        <fullName evidence="1">UDP-N-acetylenolpyruvoylglucosamine reductase</fullName>
        <ecNumber evidence="1">1.3.1.98</ecNumber>
    </recommendedName>
    <alternativeName>
        <fullName evidence="1">UDP-N-acetylmuramate dehydrogenase</fullName>
    </alternativeName>
</protein>
<comment type="function">
    <text evidence="1">Cell wall formation.</text>
</comment>
<comment type="catalytic activity">
    <reaction evidence="1">
        <text>UDP-N-acetyl-alpha-D-muramate + NADP(+) = UDP-N-acetyl-3-O-(1-carboxyvinyl)-alpha-D-glucosamine + NADPH + H(+)</text>
        <dbReference type="Rhea" id="RHEA:12248"/>
        <dbReference type="ChEBI" id="CHEBI:15378"/>
        <dbReference type="ChEBI" id="CHEBI:57783"/>
        <dbReference type="ChEBI" id="CHEBI:58349"/>
        <dbReference type="ChEBI" id="CHEBI:68483"/>
        <dbReference type="ChEBI" id="CHEBI:70757"/>
        <dbReference type="EC" id="1.3.1.98"/>
    </reaction>
</comment>
<comment type="cofactor">
    <cofactor evidence="1">
        <name>FAD</name>
        <dbReference type="ChEBI" id="CHEBI:57692"/>
    </cofactor>
</comment>
<comment type="pathway">
    <text evidence="1">Cell wall biogenesis; peptidoglycan biosynthesis.</text>
</comment>
<comment type="subcellular location">
    <subcellularLocation>
        <location evidence="1">Cytoplasm</location>
    </subcellularLocation>
</comment>
<comment type="similarity">
    <text evidence="1">Belongs to the MurB family.</text>
</comment>
<gene>
    <name evidence="1" type="primary">murB</name>
    <name type="ordered locus">OB0556</name>
</gene>
<name>MURB_OCEIH</name>
<dbReference type="EC" id="1.3.1.98" evidence="1"/>
<dbReference type="EMBL" id="BA000028">
    <property type="protein sequence ID" value="BAC12512.1"/>
    <property type="molecule type" value="Genomic_DNA"/>
</dbReference>
<dbReference type="RefSeq" id="WP_011064959.1">
    <property type="nucleotide sequence ID" value="NC_004193.1"/>
</dbReference>
<dbReference type="SMR" id="Q8ESR4"/>
<dbReference type="STRING" id="221109.gene:10732760"/>
<dbReference type="KEGG" id="oih:OB0556"/>
<dbReference type="eggNOG" id="COG0812">
    <property type="taxonomic scope" value="Bacteria"/>
</dbReference>
<dbReference type="HOGENOM" id="CLU_035304_1_1_9"/>
<dbReference type="OrthoDB" id="9804753at2"/>
<dbReference type="PhylomeDB" id="Q8ESR4"/>
<dbReference type="UniPathway" id="UPA00219"/>
<dbReference type="Proteomes" id="UP000000822">
    <property type="component" value="Chromosome"/>
</dbReference>
<dbReference type="GO" id="GO:0005829">
    <property type="term" value="C:cytosol"/>
    <property type="evidence" value="ECO:0007669"/>
    <property type="project" value="TreeGrafter"/>
</dbReference>
<dbReference type="GO" id="GO:0071949">
    <property type="term" value="F:FAD binding"/>
    <property type="evidence" value="ECO:0007669"/>
    <property type="project" value="InterPro"/>
</dbReference>
<dbReference type="GO" id="GO:0008762">
    <property type="term" value="F:UDP-N-acetylmuramate dehydrogenase activity"/>
    <property type="evidence" value="ECO:0007669"/>
    <property type="project" value="UniProtKB-UniRule"/>
</dbReference>
<dbReference type="GO" id="GO:0051301">
    <property type="term" value="P:cell division"/>
    <property type="evidence" value="ECO:0007669"/>
    <property type="project" value="UniProtKB-KW"/>
</dbReference>
<dbReference type="GO" id="GO:0071555">
    <property type="term" value="P:cell wall organization"/>
    <property type="evidence" value="ECO:0007669"/>
    <property type="project" value="UniProtKB-KW"/>
</dbReference>
<dbReference type="GO" id="GO:0009252">
    <property type="term" value="P:peptidoglycan biosynthetic process"/>
    <property type="evidence" value="ECO:0007669"/>
    <property type="project" value="UniProtKB-UniRule"/>
</dbReference>
<dbReference type="GO" id="GO:0008360">
    <property type="term" value="P:regulation of cell shape"/>
    <property type="evidence" value="ECO:0007669"/>
    <property type="project" value="UniProtKB-KW"/>
</dbReference>
<dbReference type="FunFam" id="3.90.78.10:FF:000001">
    <property type="entry name" value="UDP-N-acetylenolpyruvoylglucosamine reductase"/>
    <property type="match status" value="1"/>
</dbReference>
<dbReference type="Gene3D" id="3.30.465.10">
    <property type="match status" value="1"/>
</dbReference>
<dbReference type="Gene3D" id="3.90.78.10">
    <property type="entry name" value="UDP-N-acetylenolpyruvoylglucosamine reductase, C-terminal domain"/>
    <property type="match status" value="1"/>
</dbReference>
<dbReference type="Gene3D" id="3.30.43.10">
    <property type="entry name" value="Uridine Diphospho-n-acetylenolpyruvylglucosamine Reductase, domain 2"/>
    <property type="match status" value="1"/>
</dbReference>
<dbReference type="HAMAP" id="MF_00037">
    <property type="entry name" value="MurB"/>
    <property type="match status" value="1"/>
</dbReference>
<dbReference type="InterPro" id="IPR016166">
    <property type="entry name" value="FAD-bd_PCMH"/>
</dbReference>
<dbReference type="InterPro" id="IPR036318">
    <property type="entry name" value="FAD-bd_PCMH-like_sf"/>
</dbReference>
<dbReference type="InterPro" id="IPR016167">
    <property type="entry name" value="FAD-bd_PCMH_sub1"/>
</dbReference>
<dbReference type="InterPro" id="IPR016169">
    <property type="entry name" value="FAD-bd_PCMH_sub2"/>
</dbReference>
<dbReference type="InterPro" id="IPR003170">
    <property type="entry name" value="MurB"/>
</dbReference>
<dbReference type="InterPro" id="IPR011601">
    <property type="entry name" value="MurB_C"/>
</dbReference>
<dbReference type="InterPro" id="IPR036635">
    <property type="entry name" value="MurB_C_sf"/>
</dbReference>
<dbReference type="InterPro" id="IPR006094">
    <property type="entry name" value="Oxid_FAD_bind_N"/>
</dbReference>
<dbReference type="NCBIfam" id="TIGR00179">
    <property type="entry name" value="murB"/>
    <property type="match status" value="1"/>
</dbReference>
<dbReference type="NCBIfam" id="NF010480">
    <property type="entry name" value="PRK13905.1"/>
    <property type="match status" value="1"/>
</dbReference>
<dbReference type="PANTHER" id="PTHR21071">
    <property type="entry name" value="UDP-N-ACETYLENOLPYRUVOYLGLUCOSAMINE REDUCTASE"/>
    <property type="match status" value="1"/>
</dbReference>
<dbReference type="PANTHER" id="PTHR21071:SF4">
    <property type="entry name" value="UDP-N-ACETYLENOLPYRUVOYLGLUCOSAMINE REDUCTASE"/>
    <property type="match status" value="1"/>
</dbReference>
<dbReference type="Pfam" id="PF01565">
    <property type="entry name" value="FAD_binding_4"/>
    <property type="match status" value="1"/>
</dbReference>
<dbReference type="Pfam" id="PF02873">
    <property type="entry name" value="MurB_C"/>
    <property type="match status" value="1"/>
</dbReference>
<dbReference type="SUPFAM" id="SSF56176">
    <property type="entry name" value="FAD-binding/transporter-associated domain-like"/>
    <property type="match status" value="1"/>
</dbReference>
<dbReference type="SUPFAM" id="SSF56194">
    <property type="entry name" value="Uridine diphospho-N-Acetylenolpyruvylglucosamine reductase, MurB, C-terminal domain"/>
    <property type="match status" value="1"/>
</dbReference>
<dbReference type="PROSITE" id="PS51387">
    <property type="entry name" value="FAD_PCMH"/>
    <property type="match status" value="1"/>
</dbReference>
<proteinExistence type="inferred from homology"/>
<evidence type="ECO:0000255" key="1">
    <source>
        <dbReference type="HAMAP-Rule" id="MF_00037"/>
    </source>
</evidence>
<keyword id="KW-0131">Cell cycle</keyword>
<keyword id="KW-0132">Cell division</keyword>
<keyword id="KW-0133">Cell shape</keyword>
<keyword id="KW-0961">Cell wall biogenesis/degradation</keyword>
<keyword id="KW-0963">Cytoplasm</keyword>
<keyword id="KW-0274">FAD</keyword>
<keyword id="KW-0285">Flavoprotein</keyword>
<keyword id="KW-0521">NADP</keyword>
<keyword id="KW-0560">Oxidoreductase</keyword>
<keyword id="KW-0573">Peptidoglycan synthesis</keyword>
<keyword id="KW-1185">Reference proteome</keyword>
<reference key="1">
    <citation type="journal article" date="2002" name="Nucleic Acids Res.">
        <title>Genome sequence of Oceanobacillus iheyensis isolated from the Iheya Ridge and its unexpected adaptive capabilities to extreme environments.</title>
        <authorList>
            <person name="Takami H."/>
            <person name="Takaki Y."/>
            <person name="Uchiyama I."/>
        </authorList>
    </citation>
    <scope>NUCLEOTIDE SEQUENCE [LARGE SCALE GENOMIC DNA]</scope>
    <source>
        <strain>DSM 14371 / CIP 107618 / JCM 11309 / KCTC 3954 / HTE831</strain>
    </source>
</reference>
<accession>Q8ESR4</accession>